<gene>
    <name evidence="7" type="primary">TESC</name>
    <name type="synonym">CHP3</name>
</gene>
<organism>
    <name type="scientific">Gallus gallus</name>
    <name type="common">Chicken</name>
    <dbReference type="NCBI Taxonomy" id="9031"/>
    <lineage>
        <taxon>Eukaryota</taxon>
        <taxon>Metazoa</taxon>
        <taxon>Chordata</taxon>
        <taxon>Craniata</taxon>
        <taxon>Vertebrata</taxon>
        <taxon>Euteleostomi</taxon>
        <taxon>Archelosauria</taxon>
        <taxon>Archosauria</taxon>
        <taxon>Dinosauria</taxon>
        <taxon>Saurischia</taxon>
        <taxon>Theropoda</taxon>
        <taxon>Coelurosauria</taxon>
        <taxon>Aves</taxon>
        <taxon>Neognathae</taxon>
        <taxon>Galloanserae</taxon>
        <taxon>Galliformes</taxon>
        <taxon>Phasianidae</taxon>
        <taxon>Phasianinae</taxon>
        <taxon>Gallus</taxon>
    </lineage>
</organism>
<sequence>MGSAQSVPPEMRALAERTGFTSEQIEQLHRRFKQLNHNRKTIRKEDFDTIPDLEFNPIRARIVHAFFDKRNLRKAPAGLAEEINFEDFLTIMSYFRPIEMDMDEERLESFRKEKLKFLFHMYDADYDGIITLQEYKNVLDELMSGNPHLEKESLRAIAEGAMLEAASACMARTGPDEVYEGITFEDFLKVWKGIDIETKMHVRFLTMEAIAHCY</sequence>
<comment type="function">
    <text evidence="1">Functions as an integral cofactor in cell pH regulation by controlling plasma membrane-type Na(+)/H(+) exchange activity. Promotes the induction of hematopoietic stem cell differentiation toward megakaryocytic lineage. Essential for the coupling of ERK cascade activation with the expression of ETS family genes in megakaryocytic differentiation. Also involved in granulocytic differentiation in a ERK-dependent manner. Inhibits the phosphatase activity of calcineurin (By similarity).</text>
</comment>
<comment type="subunit">
    <text evidence="3">Monomer (By similarity). Homodimer (By similarity).</text>
</comment>
<comment type="subcellular location">
    <subcellularLocation>
        <location evidence="6">Nucleus</location>
    </subcellularLocation>
    <subcellularLocation>
        <location evidence="6">Cytoplasm</location>
    </subcellularLocation>
    <subcellularLocation>
        <location evidence="2">Membrane</location>
        <topology evidence="2">Lipid-anchor</topology>
    </subcellularLocation>
    <subcellularLocation>
        <location evidence="2">Cell membrane</location>
    </subcellularLocation>
    <subcellularLocation>
        <location evidence="2">Cell projection</location>
        <location evidence="2">Lamellipodium</location>
    </subcellularLocation>
    <subcellularLocation>
        <location evidence="3">Cell projection</location>
        <location evidence="3">Ruffle membrane</location>
    </subcellularLocation>
    <text evidence="6">Expressed in both the nucleus and cytoplasm of the embryonic testis.</text>
</comment>
<comment type="tissue specificity">
    <text evidence="6">Expressed in the bipotential gonad by E4.5 and expressed in both the testis and ovary by E5.5, but with expression higher in the testis. Expressed in the testis cords but also at low levels in the interstitium. In the ovary, expression is principally in the ovarian cortex, but also in the medulla. Also expressed in the embryonic brain, with expression highest in the region between the nasal placode and olfactory bulb. Also expressed in the embryonic heart and tail.</text>
</comment>
<comment type="domain">
    <text evidence="1">Binds calcium via its EF-hands. Calcium-binding mediates a conformational change. Can also bind magnesium (By similarity).</text>
</comment>
<comment type="similarity">
    <text evidence="8">Belongs to the calcineurin regulatory subunit family. CHP subfamily.</text>
</comment>
<accession>A0AVX7</accession>
<reference evidence="8 9" key="1">
    <citation type="journal article" date="2005" name="Genome Res.">
        <title>Transcriptome analysis for the chicken based on 19,626 finished cDNA sequences and 485,337 expressed sequence tags.</title>
        <authorList>
            <person name="Hubbard S.J."/>
            <person name="Grafham D.V."/>
            <person name="Beattie K.J."/>
            <person name="Overton I.M."/>
            <person name="McLaren S.R."/>
            <person name="Croning M.D.R."/>
            <person name="Boardman P.E."/>
            <person name="Bonfield J.K."/>
            <person name="Burnside J."/>
            <person name="Davies R.M."/>
            <person name="Farrell E.R."/>
            <person name="Francis M.D."/>
            <person name="Griffiths-Jones S."/>
            <person name="Humphray S.J."/>
            <person name="Hyland C."/>
            <person name="Scott C.E."/>
            <person name="Tang H."/>
            <person name="Taylor R.G."/>
            <person name="Tickle C."/>
            <person name="Brown W.R.A."/>
            <person name="Birney E."/>
            <person name="Rogers J."/>
            <person name="Wilson S.A."/>
        </authorList>
    </citation>
    <scope>NUCLEOTIDE SEQUENCE [LARGE SCALE MRNA]</scope>
    <source>
        <strain evidence="9">Layer</strain>
    </source>
</reference>
<reference evidence="8" key="2">
    <citation type="journal article" date="2009" name="Gene Expr. Patterns">
        <title>Expression and evolutionary conservation of the tescalcin gene during development.</title>
        <authorList>
            <person name="Bao Y."/>
            <person name="Hudson Q.J."/>
            <person name="Perera E.M."/>
            <person name="Akan L."/>
            <person name="Tobet S.A."/>
            <person name="Smith C.A."/>
            <person name="Sinclair A.H."/>
            <person name="Berkovitz G.D."/>
        </authorList>
    </citation>
    <scope>IDENTIFICATION</scope>
    <scope>SUBCELLULAR LOCATION</scope>
    <scope>TISSUE SPECIFICITY</scope>
</reference>
<protein>
    <recommendedName>
        <fullName>Calcineurin B homologous protein 3</fullName>
    </recommendedName>
    <alternativeName>
        <fullName evidence="7">Tescalcin</fullName>
        <shortName evidence="2">TSC</shortName>
    </alternativeName>
</protein>
<evidence type="ECO:0000250" key="1"/>
<evidence type="ECO:0000250" key="2">
    <source>
        <dbReference type="UniProtKB" id="Q96BS2"/>
    </source>
</evidence>
<evidence type="ECO:0000250" key="3">
    <source>
        <dbReference type="UniProtKB" id="Q9JKL5"/>
    </source>
</evidence>
<evidence type="ECO:0000255" key="4"/>
<evidence type="ECO:0000255" key="5">
    <source>
        <dbReference type="PROSITE-ProRule" id="PRU00448"/>
    </source>
</evidence>
<evidence type="ECO:0000269" key="6">
    <source>
    </source>
</evidence>
<evidence type="ECO:0000303" key="7">
    <source>
    </source>
</evidence>
<evidence type="ECO:0000305" key="8"/>
<evidence type="ECO:0000312" key="9">
    <source>
        <dbReference type="EMBL" id="CAL64631.1"/>
    </source>
</evidence>
<keyword id="KW-0106">Calcium</keyword>
<keyword id="KW-1003">Cell membrane</keyword>
<keyword id="KW-0966">Cell projection</keyword>
<keyword id="KW-0963">Cytoplasm</keyword>
<keyword id="KW-0221">Differentiation</keyword>
<keyword id="KW-0449">Lipoprotein</keyword>
<keyword id="KW-0472">Membrane</keyword>
<keyword id="KW-0479">Metal-binding</keyword>
<keyword id="KW-0519">Myristate</keyword>
<keyword id="KW-0539">Nucleus</keyword>
<keyword id="KW-0649">Protein kinase inhibitor</keyword>
<keyword id="KW-1185">Reference proteome</keyword>
<feature type="initiator methionine" description="Removed" evidence="4">
    <location>
        <position position="1"/>
    </location>
</feature>
<feature type="chain" id="PRO_0000390718" description="Calcineurin B homologous protein 3">
    <location>
        <begin position="2"/>
        <end position="214"/>
    </location>
</feature>
<feature type="domain" description="EF-hand" evidence="5">
    <location>
        <begin position="110"/>
        <end position="145"/>
    </location>
</feature>
<feature type="binding site" evidence="8">
    <location>
        <position position="123"/>
    </location>
    <ligand>
        <name>Ca(2+)</name>
        <dbReference type="ChEBI" id="CHEBI:29108"/>
    </ligand>
</feature>
<feature type="binding site" evidence="8">
    <location>
        <position position="125"/>
    </location>
    <ligand>
        <name>Ca(2+)</name>
        <dbReference type="ChEBI" id="CHEBI:29108"/>
    </ligand>
</feature>
<feature type="binding site" evidence="8">
    <location>
        <position position="127"/>
    </location>
    <ligand>
        <name>Ca(2+)</name>
        <dbReference type="ChEBI" id="CHEBI:29108"/>
    </ligand>
</feature>
<feature type="binding site" evidence="8">
    <location>
        <position position="134"/>
    </location>
    <ligand>
        <name>Ca(2+)</name>
        <dbReference type="ChEBI" id="CHEBI:29108"/>
    </ligand>
</feature>
<feature type="lipid moiety-binding region" description="N-myristoyl glycine" evidence="1">
    <location>
        <position position="2"/>
    </location>
</feature>
<name>CHP3_CHICK</name>
<proteinExistence type="evidence at transcript level"/>
<dbReference type="EMBL" id="BX931037">
    <property type="protein sequence ID" value="CAL64631.1"/>
    <property type="molecule type" value="mRNA"/>
</dbReference>
<dbReference type="RefSeq" id="NP_001074353.1">
    <property type="nucleotide sequence ID" value="NM_001080884.2"/>
</dbReference>
<dbReference type="SMR" id="A0AVX7"/>
<dbReference type="FunCoup" id="A0AVX7">
    <property type="interactions" value="100"/>
</dbReference>
<dbReference type="STRING" id="9031.ENSGALP00000013348"/>
<dbReference type="PaxDb" id="9031-ENSGALP00000013348"/>
<dbReference type="GeneID" id="771113"/>
<dbReference type="KEGG" id="gga:771113"/>
<dbReference type="CTD" id="54997"/>
<dbReference type="VEuPathDB" id="HostDB:geneid_771113"/>
<dbReference type="eggNOG" id="KOG0034">
    <property type="taxonomic scope" value="Eukaryota"/>
</dbReference>
<dbReference type="InParanoid" id="A0AVX7"/>
<dbReference type="OrthoDB" id="191686at2759"/>
<dbReference type="PhylomeDB" id="A0AVX7"/>
<dbReference type="PRO" id="PR:A0AVX7"/>
<dbReference type="Proteomes" id="UP000000539">
    <property type="component" value="Unassembled WGS sequence"/>
</dbReference>
<dbReference type="GO" id="GO:0005737">
    <property type="term" value="C:cytoplasm"/>
    <property type="evidence" value="ECO:0000314"/>
    <property type="project" value="UniProtKB"/>
</dbReference>
<dbReference type="GO" id="GO:0030027">
    <property type="term" value="C:lamellipodium"/>
    <property type="evidence" value="ECO:0000250"/>
    <property type="project" value="UniProtKB"/>
</dbReference>
<dbReference type="GO" id="GO:0005634">
    <property type="term" value="C:nucleus"/>
    <property type="evidence" value="ECO:0000314"/>
    <property type="project" value="UniProtKB"/>
</dbReference>
<dbReference type="GO" id="GO:0005886">
    <property type="term" value="C:plasma membrane"/>
    <property type="evidence" value="ECO:0000250"/>
    <property type="project" value="UniProtKB"/>
</dbReference>
<dbReference type="GO" id="GO:0001726">
    <property type="term" value="C:ruffle"/>
    <property type="evidence" value="ECO:0000250"/>
    <property type="project" value="UniProtKB"/>
</dbReference>
<dbReference type="GO" id="GO:0032587">
    <property type="term" value="C:ruffle membrane"/>
    <property type="evidence" value="ECO:0007669"/>
    <property type="project" value="UniProtKB-SubCell"/>
</dbReference>
<dbReference type="GO" id="GO:0005509">
    <property type="term" value="F:calcium ion binding"/>
    <property type="evidence" value="ECO:0000250"/>
    <property type="project" value="UniProtKB"/>
</dbReference>
<dbReference type="GO" id="GO:0000287">
    <property type="term" value="F:magnesium ion binding"/>
    <property type="evidence" value="ECO:0000250"/>
    <property type="project" value="UniProtKB"/>
</dbReference>
<dbReference type="GO" id="GO:0019212">
    <property type="term" value="F:phosphatase inhibitor activity"/>
    <property type="evidence" value="ECO:0000250"/>
    <property type="project" value="UniProtKB"/>
</dbReference>
<dbReference type="GO" id="GO:0042803">
    <property type="term" value="F:protein homodimerization activity"/>
    <property type="evidence" value="ECO:0000250"/>
    <property type="project" value="UniProtKB"/>
</dbReference>
<dbReference type="GO" id="GO:0004860">
    <property type="term" value="F:protein kinase inhibitor activity"/>
    <property type="evidence" value="ECO:0007669"/>
    <property type="project" value="UniProtKB-KW"/>
</dbReference>
<dbReference type="GO" id="GO:0030154">
    <property type="term" value="P:cell differentiation"/>
    <property type="evidence" value="ECO:0007669"/>
    <property type="project" value="UniProtKB-KW"/>
</dbReference>
<dbReference type="GO" id="GO:0071300">
    <property type="term" value="P:cellular response to retinoic acid"/>
    <property type="evidence" value="ECO:0000250"/>
    <property type="project" value="UniProtKB"/>
</dbReference>
<dbReference type="GO" id="GO:0030854">
    <property type="term" value="P:positive regulation of granulocyte differentiation"/>
    <property type="evidence" value="ECO:0000250"/>
    <property type="project" value="UniProtKB"/>
</dbReference>
<dbReference type="GO" id="GO:0032417">
    <property type="term" value="P:positive regulation of sodium:proton antiporter activity"/>
    <property type="evidence" value="ECO:0000250"/>
    <property type="project" value="UniProtKB"/>
</dbReference>
<dbReference type="GO" id="GO:0072659">
    <property type="term" value="P:protein localization to plasma membrane"/>
    <property type="evidence" value="ECO:0000250"/>
    <property type="project" value="UniProtKB"/>
</dbReference>
<dbReference type="GO" id="GO:0051604">
    <property type="term" value="P:protein maturation"/>
    <property type="evidence" value="ECO:0000250"/>
    <property type="project" value="UniProtKB"/>
</dbReference>
<dbReference type="GO" id="GO:0050821">
    <property type="term" value="P:protein stabilization"/>
    <property type="evidence" value="ECO:0000250"/>
    <property type="project" value="UniProtKB"/>
</dbReference>
<dbReference type="GO" id="GO:0033628">
    <property type="term" value="P:regulation of cell adhesion mediated by integrin"/>
    <property type="evidence" value="ECO:0000318"/>
    <property type="project" value="GO_Central"/>
</dbReference>
<dbReference type="FunFam" id="1.10.238.10:FF:000205">
    <property type="entry name" value="calcineurin B homologous protein 3"/>
    <property type="match status" value="1"/>
</dbReference>
<dbReference type="Gene3D" id="1.10.238.10">
    <property type="entry name" value="EF-hand"/>
    <property type="match status" value="1"/>
</dbReference>
<dbReference type="InterPro" id="IPR052490">
    <property type="entry name" value="CHP3"/>
</dbReference>
<dbReference type="InterPro" id="IPR011992">
    <property type="entry name" value="EF-hand-dom_pair"/>
</dbReference>
<dbReference type="InterPro" id="IPR002048">
    <property type="entry name" value="EF_hand_dom"/>
</dbReference>
<dbReference type="PANTHER" id="PTHR46823">
    <property type="entry name" value="CALCINEURIN B HOMOLOGOUS PROTEIN 3"/>
    <property type="match status" value="1"/>
</dbReference>
<dbReference type="SUPFAM" id="SSF47473">
    <property type="entry name" value="EF-hand"/>
    <property type="match status" value="1"/>
</dbReference>
<dbReference type="PROSITE" id="PS50222">
    <property type="entry name" value="EF_HAND_2"/>
    <property type="match status" value="2"/>
</dbReference>